<name>SYT_CAUSK</name>
<proteinExistence type="inferred from homology"/>
<evidence type="ECO:0000255" key="1">
    <source>
        <dbReference type="HAMAP-Rule" id="MF_00184"/>
    </source>
</evidence>
<evidence type="ECO:0000255" key="2">
    <source>
        <dbReference type="PROSITE-ProRule" id="PRU01228"/>
    </source>
</evidence>
<evidence type="ECO:0000256" key="3">
    <source>
        <dbReference type="SAM" id="MobiDB-lite"/>
    </source>
</evidence>
<keyword id="KW-0030">Aminoacyl-tRNA synthetase</keyword>
<keyword id="KW-0067">ATP-binding</keyword>
<keyword id="KW-0963">Cytoplasm</keyword>
<keyword id="KW-0436">Ligase</keyword>
<keyword id="KW-0479">Metal-binding</keyword>
<keyword id="KW-0547">Nucleotide-binding</keyword>
<keyword id="KW-0648">Protein biosynthesis</keyword>
<keyword id="KW-0694">RNA-binding</keyword>
<keyword id="KW-0820">tRNA-binding</keyword>
<keyword id="KW-0862">Zinc</keyword>
<reference key="1">
    <citation type="submission" date="2008-01" db="EMBL/GenBank/DDBJ databases">
        <title>Complete sequence of chromosome of Caulobacter sp. K31.</title>
        <authorList>
            <consortium name="US DOE Joint Genome Institute"/>
            <person name="Copeland A."/>
            <person name="Lucas S."/>
            <person name="Lapidus A."/>
            <person name="Barry K."/>
            <person name="Glavina del Rio T."/>
            <person name="Dalin E."/>
            <person name="Tice H."/>
            <person name="Pitluck S."/>
            <person name="Bruce D."/>
            <person name="Goodwin L."/>
            <person name="Thompson L.S."/>
            <person name="Brettin T."/>
            <person name="Detter J.C."/>
            <person name="Han C."/>
            <person name="Schmutz J."/>
            <person name="Larimer F."/>
            <person name="Land M."/>
            <person name="Hauser L."/>
            <person name="Kyrpides N."/>
            <person name="Kim E."/>
            <person name="Stephens C."/>
            <person name="Richardson P."/>
        </authorList>
    </citation>
    <scope>NUCLEOTIDE SEQUENCE [LARGE SCALE GENOMIC DNA]</scope>
    <source>
        <strain>K31</strain>
    </source>
</reference>
<dbReference type="EC" id="6.1.1.3" evidence="1"/>
<dbReference type="EMBL" id="CP000927">
    <property type="protein sequence ID" value="ABZ73645.1"/>
    <property type="molecule type" value="Genomic_DNA"/>
</dbReference>
<dbReference type="SMR" id="B0T0Z7"/>
<dbReference type="STRING" id="366602.Caul_4525"/>
<dbReference type="KEGG" id="cak:Caul_4525"/>
<dbReference type="eggNOG" id="COG0441">
    <property type="taxonomic scope" value="Bacteria"/>
</dbReference>
<dbReference type="HOGENOM" id="CLU_008554_0_1_5"/>
<dbReference type="OrthoDB" id="9802304at2"/>
<dbReference type="GO" id="GO:0005737">
    <property type="term" value="C:cytoplasm"/>
    <property type="evidence" value="ECO:0007669"/>
    <property type="project" value="UniProtKB-SubCell"/>
</dbReference>
<dbReference type="GO" id="GO:0005524">
    <property type="term" value="F:ATP binding"/>
    <property type="evidence" value="ECO:0007669"/>
    <property type="project" value="UniProtKB-UniRule"/>
</dbReference>
<dbReference type="GO" id="GO:0046872">
    <property type="term" value="F:metal ion binding"/>
    <property type="evidence" value="ECO:0007669"/>
    <property type="project" value="UniProtKB-KW"/>
</dbReference>
<dbReference type="GO" id="GO:0004829">
    <property type="term" value="F:threonine-tRNA ligase activity"/>
    <property type="evidence" value="ECO:0007669"/>
    <property type="project" value="UniProtKB-UniRule"/>
</dbReference>
<dbReference type="GO" id="GO:0000049">
    <property type="term" value="F:tRNA binding"/>
    <property type="evidence" value="ECO:0007669"/>
    <property type="project" value="UniProtKB-KW"/>
</dbReference>
<dbReference type="GO" id="GO:0006435">
    <property type="term" value="P:threonyl-tRNA aminoacylation"/>
    <property type="evidence" value="ECO:0007669"/>
    <property type="project" value="UniProtKB-UniRule"/>
</dbReference>
<dbReference type="CDD" id="cd01667">
    <property type="entry name" value="TGS_ThrRS"/>
    <property type="match status" value="1"/>
</dbReference>
<dbReference type="CDD" id="cd00860">
    <property type="entry name" value="ThrRS_anticodon"/>
    <property type="match status" value="1"/>
</dbReference>
<dbReference type="CDD" id="cd00771">
    <property type="entry name" value="ThrRS_core"/>
    <property type="match status" value="1"/>
</dbReference>
<dbReference type="FunFam" id="3.30.54.20:FF:000002">
    <property type="entry name" value="Threonine--tRNA ligase"/>
    <property type="match status" value="1"/>
</dbReference>
<dbReference type="FunFam" id="3.30.930.10:FF:000002">
    <property type="entry name" value="Threonine--tRNA ligase"/>
    <property type="match status" value="1"/>
</dbReference>
<dbReference type="FunFam" id="3.40.50.800:FF:000001">
    <property type="entry name" value="Threonine--tRNA ligase"/>
    <property type="match status" value="1"/>
</dbReference>
<dbReference type="FunFam" id="3.30.980.10:FF:000005">
    <property type="entry name" value="Threonyl-tRNA synthetase, mitochondrial"/>
    <property type="match status" value="1"/>
</dbReference>
<dbReference type="Gene3D" id="3.10.20.30">
    <property type="match status" value="1"/>
</dbReference>
<dbReference type="Gene3D" id="3.30.54.20">
    <property type="match status" value="1"/>
</dbReference>
<dbReference type="Gene3D" id="3.40.50.800">
    <property type="entry name" value="Anticodon-binding domain"/>
    <property type="match status" value="1"/>
</dbReference>
<dbReference type="Gene3D" id="3.30.930.10">
    <property type="entry name" value="Bira Bifunctional Protein, Domain 2"/>
    <property type="match status" value="1"/>
</dbReference>
<dbReference type="Gene3D" id="3.30.980.10">
    <property type="entry name" value="Threonyl-trna Synthetase, Chain A, domain 2"/>
    <property type="match status" value="1"/>
</dbReference>
<dbReference type="HAMAP" id="MF_00184">
    <property type="entry name" value="Thr_tRNA_synth"/>
    <property type="match status" value="1"/>
</dbReference>
<dbReference type="InterPro" id="IPR002314">
    <property type="entry name" value="aa-tRNA-synt_IIb"/>
</dbReference>
<dbReference type="InterPro" id="IPR006195">
    <property type="entry name" value="aa-tRNA-synth_II"/>
</dbReference>
<dbReference type="InterPro" id="IPR045864">
    <property type="entry name" value="aa-tRNA-synth_II/BPL/LPL"/>
</dbReference>
<dbReference type="InterPro" id="IPR004154">
    <property type="entry name" value="Anticodon-bd"/>
</dbReference>
<dbReference type="InterPro" id="IPR036621">
    <property type="entry name" value="Anticodon-bd_dom_sf"/>
</dbReference>
<dbReference type="InterPro" id="IPR012675">
    <property type="entry name" value="Beta-grasp_dom_sf"/>
</dbReference>
<dbReference type="InterPro" id="IPR004095">
    <property type="entry name" value="TGS"/>
</dbReference>
<dbReference type="InterPro" id="IPR012676">
    <property type="entry name" value="TGS-like"/>
</dbReference>
<dbReference type="InterPro" id="IPR002320">
    <property type="entry name" value="Thr-tRNA-ligase_IIa"/>
</dbReference>
<dbReference type="InterPro" id="IPR018163">
    <property type="entry name" value="Thr/Ala-tRNA-synth_IIc_edit"/>
</dbReference>
<dbReference type="InterPro" id="IPR047246">
    <property type="entry name" value="ThrRS_anticodon"/>
</dbReference>
<dbReference type="InterPro" id="IPR033728">
    <property type="entry name" value="ThrRS_core"/>
</dbReference>
<dbReference type="InterPro" id="IPR012947">
    <property type="entry name" value="tRNA_SAD"/>
</dbReference>
<dbReference type="NCBIfam" id="TIGR00418">
    <property type="entry name" value="thrS"/>
    <property type="match status" value="1"/>
</dbReference>
<dbReference type="PANTHER" id="PTHR11451:SF44">
    <property type="entry name" value="THREONINE--TRNA LIGASE, CHLOROPLASTIC_MITOCHONDRIAL 2"/>
    <property type="match status" value="1"/>
</dbReference>
<dbReference type="PANTHER" id="PTHR11451">
    <property type="entry name" value="THREONINE-TRNA LIGASE"/>
    <property type="match status" value="1"/>
</dbReference>
<dbReference type="Pfam" id="PF03129">
    <property type="entry name" value="HGTP_anticodon"/>
    <property type="match status" value="1"/>
</dbReference>
<dbReference type="Pfam" id="PF02824">
    <property type="entry name" value="TGS"/>
    <property type="match status" value="1"/>
</dbReference>
<dbReference type="Pfam" id="PF00587">
    <property type="entry name" value="tRNA-synt_2b"/>
    <property type="match status" value="1"/>
</dbReference>
<dbReference type="Pfam" id="PF07973">
    <property type="entry name" value="tRNA_SAD"/>
    <property type="match status" value="1"/>
</dbReference>
<dbReference type="PRINTS" id="PR01047">
    <property type="entry name" value="TRNASYNTHTHR"/>
</dbReference>
<dbReference type="SMART" id="SM00863">
    <property type="entry name" value="tRNA_SAD"/>
    <property type="match status" value="1"/>
</dbReference>
<dbReference type="SUPFAM" id="SSF52954">
    <property type="entry name" value="Class II aaRS ABD-related"/>
    <property type="match status" value="1"/>
</dbReference>
<dbReference type="SUPFAM" id="SSF55681">
    <property type="entry name" value="Class II aaRS and biotin synthetases"/>
    <property type="match status" value="1"/>
</dbReference>
<dbReference type="SUPFAM" id="SSF81271">
    <property type="entry name" value="TGS-like"/>
    <property type="match status" value="1"/>
</dbReference>
<dbReference type="SUPFAM" id="SSF55186">
    <property type="entry name" value="ThrRS/AlaRS common domain"/>
    <property type="match status" value="1"/>
</dbReference>
<dbReference type="PROSITE" id="PS50862">
    <property type="entry name" value="AA_TRNA_LIGASE_II"/>
    <property type="match status" value="1"/>
</dbReference>
<dbReference type="PROSITE" id="PS51880">
    <property type="entry name" value="TGS"/>
    <property type="match status" value="1"/>
</dbReference>
<gene>
    <name evidence="1" type="primary">thrS</name>
    <name type="ordered locus">Caul_4525</name>
</gene>
<organism>
    <name type="scientific">Caulobacter sp. (strain K31)</name>
    <dbReference type="NCBI Taxonomy" id="366602"/>
    <lineage>
        <taxon>Bacteria</taxon>
        <taxon>Pseudomonadati</taxon>
        <taxon>Pseudomonadota</taxon>
        <taxon>Alphaproteobacteria</taxon>
        <taxon>Caulobacterales</taxon>
        <taxon>Caulobacteraceae</taxon>
        <taxon>Caulobacter</taxon>
    </lineage>
</organism>
<sequence length="659" mass="73887">MIDLIFPDGSARQYADGSTGRDVAASISKSLEKKALLIKLDGKLLDLDRPLTPDLLGGGNRFEIITRDSPDALEVIRHDTAHVLAEAVQELFPGTQVTIGPNVEDGFYYDFARDEPFSLDDLPKIEERMRQIVDRDEKIRREEVDRDAAIADFEAMGESYKAQIIRDLPASDTITVYHQGEKWKDLCRGPHLPSTKAVGKAFKLTKLAGAYWRGDQNNAQLQRIYGTSWATEADLEAHLKRIEEAERRDHRKLGKTMDLFHIQEEGKGMVFWHPKGWTLYLALEAYMRRRLDAAGYREVKTPQILDKSLWERSGHAEKFGHAMFMCESAEGEVLAVKPMNCPGHIQIFNVGQKSYRELPLRMAEFGACHRYEPSGAMHGIMRVRAFTQDDAHIFCREEQVTEESARFIELLRSVYSDLGMHLADTKFSTRPELRAGEDAVWDKAEAALSAAAEAAGETLVLQEGEGAFYGPKLEFSLKDAIGRVWQCGTLQLDFVLPERLDAEYVAEDGSKKRPVMLHRAILGSFERFIGILLENYAGHLPLWLAPVQVVVATITSDADDYAQRVAERLTSMGIRAEVDFRNEKINYKIREHSLAKVPVIAVVGRKEAENGEVALRRLGGEGQKVLSLEDAVRALTEEATPPDLARDRAVAAPAELAQA</sequence>
<comment type="function">
    <text evidence="1">Catalyzes the attachment of threonine to tRNA(Thr) in a two-step reaction: L-threonine is first activated by ATP to form Thr-AMP and then transferred to the acceptor end of tRNA(Thr). Also edits incorrectly charged L-seryl-tRNA(Thr).</text>
</comment>
<comment type="catalytic activity">
    <reaction evidence="1">
        <text>tRNA(Thr) + L-threonine + ATP = L-threonyl-tRNA(Thr) + AMP + diphosphate + H(+)</text>
        <dbReference type="Rhea" id="RHEA:24624"/>
        <dbReference type="Rhea" id="RHEA-COMP:9670"/>
        <dbReference type="Rhea" id="RHEA-COMP:9704"/>
        <dbReference type="ChEBI" id="CHEBI:15378"/>
        <dbReference type="ChEBI" id="CHEBI:30616"/>
        <dbReference type="ChEBI" id="CHEBI:33019"/>
        <dbReference type="ChEBI" id="CHEBI:57926"/>
        <dbReference type="ChEBI" id="CHEBI:78442"/>
        <dbReference type="ChEBI" id="CHEBI:78534"/>
        <dbReference type="ChEBI" id="CHEBI:456215"/>
        <dbReference type="EC" id="6.1.1.3"/>
    </reaction>
</comment>
<comment type="cofactor">
    <cofactor evidence="1">
        <name>Zn(2+)</name>
        <dbReference type="ChEBI" id="CHEBI:29105"/>
    </cofactor>
    <text evidence="1">Binds 1 zinc ion per subunit.</text>
</comment>
<comment type="subunit">
    <text evidence="1">Homodimer.</text>
</comment>
<comment type="subcellular location">
    <subcellularLocation>
        <location evidence="1">Cytoplasm</location>
    </subcellularLocation>
</comment>
<comment type="similarity">
    <text evidence="1">Belongs to the class-II aminoacyl-tRNA synthetase family.</text>
</comment>
<feature type="chain" id="PRO_1000077352" description="Threonine--tRNA ligase">
    <location>
        <begin position="1"/>
        <end position="659"/>
    </location>
</feature>
<feature type="domain" description="TGS" evidence="2">
    <location>
        <begin position="1"/>
        <end position="61"/>
    </location>
</feature>
<feature type="region of interest" description="Catalytic" evidence="1">
    <location>
        <begin position="249"/>
        <end position="541"/>
    </location>
</feature>
<feature type="region of interest" description="Disordered" evidence="3">
    <location>
        <begin position="637"/>
        <end position="659"/>
    </location>
</feature>
<feature type="binding site" evidence="1">
    <location>
        <position position="341"/>
    </location>
    <ligand>
        <name>Zn(2+)</name>
        <dbReference type="ChEBI" id="CHEBI:29105"/>
    </ligand>
</feature>
<feature type="binding site" evidence="1">
    <location>
        <position position="392"/>
    </location>
    <ligand>
        <name>Zn(2+)</name>
        <dbReference type="ChEBI" id="CHEBI:29105"/>
    </ligand>
</feature>
<feature type="binding site" evidence="1">
    <location>
        <position position="518"/>
    </location>
    <ligand>
        <name>Zn(2+)</name>
        <dbReference type="ChEBI" id="CHEBI:29105"/>
    </ligand>
</feature>
<accession>B0T0Z7</accession>
<protein>
    <recommendedName>
        <fullName evidence="1">Threonine--tRNA ligase</fullName>
        <ecNumber evidence="1">6.1.1.3</ecNumber>
    </recommendedName>
    <alternativeName>
        <fullName evidence="1">Threonyl-tRNA synthetase</fullName>
        <shortName evidence="1">ThrRS</shortName>
    </alternativeName>
</protein>